<sequence>MTKKVYVKTFGCQMNEYDSDKMVDVLGAAEGLVKTDTPEDADVILFNTCSVREKAQEKVFSDLGRVRELKEANPNLIIGVGGCVASQEGAAIVSRAPYVDLVFGPQTLHRLPQMIDKRRESGRAQVDISFPEIEKFDHLPPARVDGPSAFVSIMEGCSKYCSYCVVPYTRGEEVSRPLDDVLTEIAGLADQGVREVTLLGQNVNAYRAGLTLGSTEIADFAQLIEYVADIPGIERIRYTTSHPKEFTQRLIDTYAKVPKLVSHLHLPVQHGSDRILMAMKRGYTVLEYKSVIRKLRAIRPDLSLSTDMIVGFPGETEEDFDKMMALVHEMKYDTSFSFIYSPRPGTPAANLHDDTPREVKLKRLQHLQATIEENVQRISDSMVGKIERILVERPARKDPNELAGRTENNRVVNFPAPIASHARLIGQMVDVKIVKAYPHSLRGELVLVHDDAPATTH</sequence>
<proteinExistence type="inferred from homology"/>
<dbReference type="EC" id="2.8.4.3" evidence="1"/>
<dbReference type="EMBL" id="CP001052">
    <property type="protein sequence ID" value="ACD17720.1"/>
    <property type="molecule type" value="Genomic_DNA"/>
</dbReference>
<dbReference type="RefSeq" id="WP_012434288.1">
    <property type="nucleotide sequence ID" value="NC_010681.1"/>
</dbReference>
<dbReference type="SMR" id="B2SYI5"/>
<dbReference type="STRING" id="398527.Bphyt_3329"/>
<dbReference type="KEGG" id="bpy:Bphyt_3329"/>
<dbReference type="eggNOG" id="COG0621">
    <property type="taxonomic scope" value="Bacteria"/>
</dbReference>
<dbReference type="HOGENOM" id="CLU_018697_2_0_4"/>
<dbReference type="OrthoDB" id="9805215at2"/>
<dbReference type="Proteomes" id="UP000001739">
    <property type="component" value="Chromosome 1"/>
</dbReference>
<dbReference type="GO" id="GO:0005829">
    <property type="term" value="C:cytosol"/>
    <property type="evidence" value="ECO:0007669"/>
    <property type="project" value="TreeGrafter"/>
</dbReference>
<dbReference type="GO" id="GO:0051539">
    <property type="term" value="F:4 iron, 4 sulfur cluster binding"/>
    <property type="evidence" value="ECO:0007669"/>
    <property type="project" value="UniProtKB-UniRule"/>
</dbReference>
<dbReference type="GO" id="GO:0046872">
    <property type="term" value="F:metal ion binding"/>
    <property type="evidence" value="ECO:0007669"/>
    <property type="project" value="UniProtKB-KW"/>
</dbReference>
<dbReference type="GO" id="GO:0035597">
    <property type="term" value="F:N6-isopentenyladenosine methylthiotransferase activity"/>
    <property type="evidence" value="ECO:0007669"/>
    <property type="project" value="TreeGrafter"/>
</dbReference>
<dbReference type="CDD" id="cd01335">
    <property type="entry name" value="Radical_SAM"/>
    <property type="match status" value="1"/>
</dbReference>
<dbReference type="FunFam" id="3.40.50.12160:FF:000001">
    <property type="entry name" value="tRNA-2-methylthio-N(6)-dimethylallyladenosine synthase"/>
    <property type="match status" value="1"/>
</dbReference>
<dbReference type="FunFam" id="3.80.30.20:FF:000001">
    <property type="entry name" value="tRNA-2-methylthio-N(6)-dimethylallyladenosine synthase 2"/>
    <property type="match status" value="1"/>
</dbReference>
<dbReference type="Gene3D" id="3.40.50.12160">
    <property type="entry name" value="Methylthiotransferase, N-terminal domain"/>
    <property type="match status" value="1"/>
</dbReference>
<dbReference type="Gene3D" id="3.80.30.20">
    <property type="entry name" value="tm_1862 like domain"/>
    <property type="match status" value="1"/>
</dbReference>
<dbReference type="HAMAP" id="MF_01864">
    <property type="entry name" value="tRNA_metthiotr_MiaB"/>
    <property type="match status" value="1"/>
</dbReference>
<dbReference type="InterPro" id="IPR006638">
    <property type="entry name" value="Elp3/MiaA/NifB-like_rSAM"/>
</dbReference>
<dbReference type="InterPro" id="IPR005839">
    <property type="entry name" value="Methylthiotransferase"/>
</dbReference>
<dbReference type="InterPro" id="IPR020612">
    <property type="entry name" value="Methylthiotransferase_CS"/>
</dbReference>
<dbReference type="InterPro" id="IPR013848">
    <property type="entry name" value="Methylthiotransferase_N"/>
</dbReference>
<dbReference type="InterPro" id="IPR038135">
    <property type="entry name" value="Methylthiotransferase_N_sf"/>
</dbReference>
<dbReference type="InterPro" id="IPR006463">
    <property type="entry name" value="MiaB_methiolase"/>
</dbReference>
<dbReference type="InterPro" id="IPR007197">
    <property type="entry name" value="rSAM"/>
</dbReference>
<dbReference type="InterPro" id="IPR023404">
    <property type="entry name" value="rSAM_horseshoe"/>
</dbReference>
<dbReference type="InterPro" id="IPR002792">
    <property type="entry name" value="TRAM_dom"/>
</dbReference>
<dbReference type="NCBIfam" id="TIGR01574">
    <property type="entry name" value="miaB-methiolase"/>
    <property type="match status" value="1"/>
</dbReference>
<dbReference type="NCBIfam" id="TIGR00089">
    <property type="entry name" value="MiaB/RimO family radical SAM methylthiotransferase"/>
    <property type="match status" value="1"/>
</dbReference>
<dbReference type="PANTHER" id="PTHR43020">
    <property type="entry name" value="CDK5 REGULATORY SUBUNIT-ASSOCIATED PROTEIN 1"/>
    <property type="match status" value="1"/>
</dbReference>
<dbReference type="PANTHER" id="PTHR43020:SF2">
    <property type="entry name" value="MITOCHONDRIAL TRNA METHYLTHIOTRANSFERASE CDK5RAP1"/>
    <property type="match status" value="1"/>
</dbReference>
<dbReference type="Pfam" id="PF04055">
    <property type="entry name" value="Radical_SAM"/>
    <property type="match status" value="1"/>
</dbReference>
<dbReference type="Pfam" id="PF01938">
    <property type="entry name" value="TRAM"/>
    <property type="match status" value="1"/>
</dbReference>
<dbReference type="Pfam" id="PF00919">
    <property type="entry name" value="UPF0004"/>
    <property type="match status" value="1"/>
</dbReference>
<dbReference type="SFLD" id="SFLDF00273">
    <property type="entry name" value="(dimethylallyl)adenosine_tRNA"/>
    <property type="match status" value="1"/>
</dbReference>
<dbReference type="SFLD" id="SFLDG01082">
    <property type="entry name" value="B12-binding_domain_containing"/>
    <property type="match status" value="1"/>
</dbReference>
<dbReference type="SFLD" id="SFLDG01061">
    <property type="entry name" value="methylthiotransferase"/>
    <property type="match status" value="1"/>
</dbReference>
<dbReference type="SMART" id="SM00729">
    <property type="entry name" value="Elp3"/>
    <property type="match status" value="1"/>
</dbReference>
<dbReference type="SUPFAM" id="SSF102114">
    <property type="entry name" value="Radical SAM enzymes"/>
    <property type="match status" value="1"/>
</dbReference>
<dbReference type="PROSITE" id="PS51449">
    <property type="entry name" value="MTTASE_N"/>
    <property type="match status" value="1"/>
</dbReference>
<dbReference type="PROSITE" id="PS01278">
    <property type="entry name" value="MTTASE_RADICAL"/>
    <property type="match status" value="1"/>
</dbReference>
<dbReference type="PROSITE" id="PS51918">
    <property type="entry name" value="RADICAL_SAM"/>
    <property type="match status" value="1"/>
</dbReference>
<dbReference type="PROSITE" id="PS50926">
    <property type="entry name" value="TRAM"/>
    <property type="match status" value="1"/>
</dbReference>
<feature type="chain" id="PRO_0000374184" description="tRNA-2-methylthio-N(6)-dimethylallyladenosine synthase">
    <location>
        <begin position="1"/>
        <end position="457"/>
    </location>
</feature>
<feature type="domain" description="MTTase N-terminal" evidence="1">
    <location>
        <begin position="3"/>
        <end position="120"/>
    </location>
</feature>
<feature type="domain" description="Radical SAM core" evidence="2">
    <location>
        <begin position="143"/>
        <end position="377"/>
    </location>
</feature>
<feature type="domain" description="TRAM" evidence="1">
    <location>
        <begin position="380"/>
        <end position="447"/>
    </location>
</feature>
<feature type="binding site" evidence="1">
    <location>
        <position position="12"/>
    </location>
    <ligand>
        <name>[4Fe-4S] cluster</name>
        <dbReference type="ChEBI" id="CHEBI:49883"/>
        <label>1</label>
    </ligand>
</feature>
<feature type="binding site" evidence="1">
    <location>
        <position position="49"/>
    </location>
    <ligand>
        <name>[4Fe-4S] cluster</name>
        <dbReference type="ChEBI" id="CHEBI:49883"/>
        <label>1</label>
    </ligand>
</feature>
<feature type="binding site" evidence="1">
    <location>
        <position position="83"/>
    </location>
    <ligand>
        <name>[4Fe-4S] cluster</name>
        <dbReference type="ChEBI" id="CHEBI:49883"/>
        <label>1</label>
    </ligand>
</feature>
<feature type="binding site" evidence="1">
    <location>
        <position position="157"/>
    </location>
    <ligand>
        <name>[4Fe-4S] cluster</name>
        <dbReference type="ChEBI" id="CHEBI:49883"/>
        <label>2</label>
        <note>4Fe-4S-S-AdoMet</note>
    </ligand>
</feature>
<feature type="binding site" evidence="1">
    <location>
        <position position="161"/>
    </location>
    <ligand>
        <name>[4Fe-4S] cluster</name>
        <dbReference type="ChEBI" id="CHEBI:49883"/>
        <label>2</label>
        <note>4Fe-4S-S-AdoMet</note>
    </ligand>
</feature>
<feature type="binding site" evidence="1">
    <location>
        <position position="164"/>
    </location>
    <ligand>
        <name>[4Fe-4S] cluster</name>
        <dbReference type="ChEBI" id="CHEBI:49883"/>
        <label>2</label>
        <note>4Fe-4S-S-AdoMet</note>
    </ligand>
</feature>
<reference key="1">
    <citation type="journal article" date="2011" name="J. Bacteriol.">
        <title>Complete genome sequence of the plant growth-promoting endophyte Burkholderia phytofirmans strain PsJN.</title>
        <authorList>
            <person name="Weilharter A."/>
            <person name="Mitter B."/>
            <person name="Shin M.V."/>
            <person name="Chain P.S."/>
            <person name="Nowak J."/>
            <person name="Sessitsch A."/>
        </authorList>
    </citation>
    <scope>NUCLEOTIDE SEQUENCE [LARGE SCALE GENOMIC DNA]</scope>
    <source>
        <strain>DSM 17436 / LMG 22146 / PsJN</strain>
    </source>
</reference>
<comment type="function">
    <text evidence="1">Catalyzes the methylthiolation of N6-(dimethylallyl)adenosine (i(6)A), leading to the formation of 2-methylthio-N6-(dimethylallyl)adenosine (ms(2)i(6)A) at position 37 in tRNAs that read codons beginning with uridine.</text>
</comment>
<comment type="catalytic activity">
    <reaction evidence="1">
        <text>N(6)-dimethylallyladenosine(37) in tRNA + (sulfur carrier)-SH + AH2 + 2 S-adenosyl-L-methionine = 2-methylsulfanyl-N(6)-dimethylallyladenosine(37) in tRNA + (sulfur carrier)-H + 5'-deoxyadenosine + L-methionine + A + S-adenosyl-L-homocysteine + 2 H(+)</text>
        <dbReference type="Rhea" id="RHEA:37067"/>
        <dbReference type="Rhea" id="RHEA-COMP:10375"/>
        <dbReference type="Rhea" id="RHEA-COMP:10376"/>
        <dbReference type="Rhea" id="RHEA-COMP:14737"/>
        <dbReference type="Rhea" id="RHEA-COMP:14739"/>
        <dbReference type="ChEBI" id="CHEBI:13193"/>
        <dbReference type="ChEBI" id="CHEBI:15378"/>
        <dbReference type="ChEBI" id="CHEBI:17319"/>
        <dbReference type="ChEBI" id="CHEBI:17499"/>
        <dbReference type="ChEBI" id="CHEBI:29917"/>
        <dbReference type="ChEBI" id="CHEBI:57844"/>
        <dbReference type="ChEBI" id="CHEBI:57856"/>
        <dbReference type="ChEBI" id="CHEBI:59789"/>
        <dbReference type="ChEBI" id="CHEBI:64428"/>
        <dbReference type="ChEBI" id="CHEBI:74415"/>
        <dbReference type="ChEBI" id="CHEBI:74417"/>
        <dbReference type="EC" id="2.8.4.3"/>
    </reaction>
</comment>
<comment type="cofactor">
    <cofactor evidence="1">
        <name>[4Fe-4S] cluster</name>
        <dbReference type="ChEBI" id="CHEBI:49883"/>
    </cofactor>
    <text evidence="1">Binds 2 [4Fe-4S] clusters. One cluster is coordinated with 3 cysteines and an exchangeable S-adenosyl-L-methionine.</text>
</comment>
<comment type="subunit">
    <text evidence="1">Monomer.</text>
</comment>
<comment type="subcellular location">
    <subcellularLocation>
        <location evidence="1">Cytoplasm</location>
    </subcellularLocation>
</comment>
<comment type="similarity">
    <text evidence="1">Belongs to the methylthiotransferase family. MiaB subfamily.</text>
</comment>
<name>MIAB_PARPJ</name>
<organism>
    <name type="scientific">Paraburkholderia phytofirmans (strain DSM 17436 / LMG 22146 / PsJN)</name>
    <name type="common">Burkholderia phytofirmans</name>
    <dbReference type="NCBI Taxonomy" id="398527"/>
    <lineage>
        <taxon>Bacteria</taxon>
        <taxon>Pseudomonadati</taxon>
        <taxon>Pseudomonadota</taxon>
        <taxon>Betaproteobacteria</taxon>
        <taxon>Burkholderiales</taxon>
        <taxon>Burkholderiaceae</taxon>
        <taxon>Paraburkholderia</taxon>
    </lineage>
</organism>
<protein>
    <recommendedName>
        <fullName evidence="1">tRNA-2-methylthio-N(6)-dimethylallyladenosine synthase</fullName>
        <ecNumber evidence="1">2.8.4.3</ecNumber>
    </recommendedName>
    <alternativeName>
        <fullName evidence="1">(Dimethylallyl)adenosine tRNA methylthiotransferase MiaB</fullName>
    </alternativeName>
    <alternativeName>
        <fullName evidence="1">tRNA-i(6)A37 methylthiotransferase</fullName>
    </alternativeName>
</protein>
<evidence type="ECO:0000255" key="1">
    <source>
        <dbReference type="HAMAP-Rule" id="MF_01864"/>
    </source>
</evidence>
<evidence type="ECO:0000255" key="2">
    <source>
        <dbReference type="PROSITE-ProRule" id="PRU01266"/>
    </source>
</evidence>
<gene>
    <name evidence="1" type="primary">miaB</name>
    <name type="ordered locus">Bphyt_3329</name>
</gene>
<keyword id="KW-0004">4Fe-4S</keyword>
<keyword id="KW-0963">Cytoplasm</keyword>
<keyword id="KW-0408">Iron</keyword>
<keyword id="KW-0411">Iron-sulfur</keyword>
<keyword id="KW-0479">Metal-binding</keyword>
<keyword id="KW-0949">S-adenosyl-L-methionine</keyword>
<keyword id="KW-0808">Transferase</keyword>
<keyword id="KW-0819">tRNA processing</keyword>
<accession>B2SYI5</accession>